<gene>
    <name evidence="1" type="primary">ileS</name>
    <name type="ordered locus">Mlab_0186</name>
</gene>
<dbReference type="EC" id="6.1.1.5" evidence="1"/>
<dbReference type="EMBL" id="CP000559">
    <property type="protein sequence ID" value="ABN06362.1"/>
    <property type="molecule type" value="Genomic_DNA"/>
</dbReference>
<dbReference type="RefSeq" id="WP_011832563.1">
    <property type="nucleotide sequence ID" value="NC_008942.1"/>
</dbReference>
<dbReference type="SMR" id="A2SPV6"/>
<dbReference type="STRING" id="410358.Mlab_0186"/>
<dbReference type="GeneID" id="4795794"/>
<dbReference type="KEGG" id="mla:Mlab_0186"/>
<dbReference type="eggNOG" id="arCOG00807">
    <property type="taxonomic scope" value="Archaea"/>
</dbReference>
<dbReference type="HOGENOM" id="CLU_001493_1_1_2"/>
<dbReference type="OrthoDB" id="30823at2157"/>
<dbReference type="Proteomes" id="UP000000365">
    <property type="component" value="Chromosome"/>
</dbReference>
<dbReference type="GO" id="GO:0005737">
    <property type="term" value="C:cytoplasm"/>
    <property type="evidence" value="ECO:0007669"/>
    <property type="project" value="UniProtKB-SubCell"/>
</dbReference>
<dbReference type="GO" id="GO:0002161">
    <property type="term" value="F:aminoacyl-tRNA deacylase activity"/>
    <property type="evidence" value="ECO:0007669"/>
    <property type="project" value="InterPro"/>
</dbReference>
<dbReference type="GO" id="GO:0005524">
    <property type="term" value="F:ATP binding"/>
    <property type="evidence" value="ECO:0007669"/>
    <property type="project" value="UniProtKB-UniRule"/>
</dbReference>
<dbReference type="GO" id="GO:0004822">
    <property type="term" value="F:isoleucine-tRNA ligase activity"/>
    <property type="evidence" value="ECO:0007669"/>
    <property type="project" value="UniProtKB-UniRule"/>
</dbReference>
<dbReference type="GO" id="GO:0000049">
    <property type="term" value="F:tRNA binding"/>
    <property type="evidence" value="ECO:0007669"/>
    <property type="project" value="InterPro"/>
</dbReference>
<dbReference type="GO" id="GO:0008270">
    <property type="term" value="F:zinc ion binding"/>
    <property type="evidence" value="ECO:0007669"/>
    <property type="project" value="UniProtKB-UniRule"/>
</dbReference>
<dbReference type="GO" id="GO:0006428">
    <property type="term" value="P:isoleucyl-tRNA aminoacylation"/>
    <property type="evidence" value="ECO:0007669"/>
    <property type="project" value="UniProtKB-UniRule"/>
</dbReference>
<dbReference type="CDD" id="cd07961">
    <property type="entry name" value="Anticodon_Ia_Ile_ABEc"/>
    <property type="match status" value="1"/>
</dbReference>
<dbReference type="CDD" id="cd00818">
    <property type="entry name" value="IleRS_core"/>
    <property type="match status" value="1"/>
</dbReference>
<dbReference type="FunFam" id="3.40.50.620:FF:000286">
    <property type="entry name" value="Isoleucine--tRNA ligase"/>
    <property type="match status" value="1"/>
</dbReference>
<dbReference type="Gene3D" id="3.40.50.620">
    <property type="entry name" value="HUPs"/>
    <property type="match status" value="2"/>
</dbReference>
<dbReference type="Gene3D" id="1.10.730.10">
    <property type="entry name" value="Isoleucyl-tRNA Synthetase, Domain 1"/>
    <property type="match status" value="1"/>
</dbReference>
<dbReference type="Gene3D" id="3.90.740.10">
    <property type="entry name" value="Valyl/Leucyl/Isoleucyl-tRNA synthetase, editing domain"/>
    <property type="match status" value="1"/>
</dbReference>
<dbReference type="HAMAP" id="MF_02003">
    <property type="entry name" value="Ile_tRNA_synth_type2"/>
    <property type="match status" value="1"/>
</dbReference>
<dbReference type="InterPro" id="IPR001412">
    <property type="entry name" value="aa-tRNA-synth_I_CS"/>
</dbReference>
<dbReference type="InterPro" id="IPR002300">
    <property type="entry name" value="aa-tRNA-synth_Ia"/>
</dbReference>
<dbReference type="InterPro" id="IPR033709">
    <property type="entry name" value="Anticodon_Ile_ABEc"/>
</dbReference>
<dbReference type="InterPro" id="IPR002301">
    <property type="entry name" value="Ile-tRNA-ligase"/>
</dbReference>
<dbReference type="InterPro" id="IPR023586">
    <property type="entry name" value="Ile-tRNA-ligase_type2"/>
</dbReference>
<dbReference type="InterPro" id="IPR013155">
    <property type="entry name" value="M/V/L/I-tRNA-synth_anticd-bd"/>
</dbReference>
<dbReference type="InterPro" id="IPR014729">
    <property type="entry name" value="Rossmann-like_a/b/a_fold"/>
</dbReference>
<dbReference type="InterPro" id="IPR009080">
    <property type="entry name" value="tRNAsynth_Ia_anticodon-bd"/>
</dbReference>
<dbReference type="InterPro" id="IPR009008">
    <property type="entry name" value="Val/Leu/Ile-tRNA-synth_edit"/>
</dbReference>
<dbReference type="NCBIfam" id="TIGR00392">
    <property type="entry name" value="ileS"/>
    <property type="match status" value="1"/>
</dbReference>
<dbReference type="PANTHER" id="PTHR42780:SF1">
    <property type="entry name" value="ISOLEUCINE--TRNA LIGASE, CYTOPLASMIC"/>
    <property type="match status" value="1"/>
</dbReference>
<dbReference type="PANTHER" id="PTHR42780">
    <property type="entry name" value="SOLEUCYL-TRNA SYNTHETASE"/>
    <property type="match status" value="1"/>
</dbReference>
<dbReference type="Pfam" id="PF08264">
    <property type="entry name" value="Anticodon_1"/>
    <property type="match status" value="1"/>
</dbReference>
<dbReference type="Pfam" id="PF19302">
    <property type="entry name" value="DUF5915"/>
    <property type="match status" value="1"/>
</dbReference>
<dbReference type="Pfam" id="PF00133">
    <property type="entry name" value="tRNA-synt_1"/>
    <property type="match status" value="1"/>
</dbReference>
<dbReference type="PRINTS" id="PR00984">
    <property type="entry name" value="TRNASYNTHILE"/>
</dbReference>
<dbReference type="SUPFAM" id="SSF47323">
    <property type="entry name" value="Anticodon-binding domain of a subclass of class I aminoacyl-tRNA synthetases"/>
    <property type="match status" value="1"/>
</dbReference>
<dbReference type="SUPFAM" id="SSF52374">
    <property type="entry name" value="Nucleotidylyl transferase"/>
    <property type="match status" value="1"/>
</dbReference>
<dbReference type="SUPFAM" id="SSF50677">
    <property type="entry name" value="ValRS/IleRS/LeuRS editing domain"/>
    <property type="match status" value="1"/>
</dbReference>
<dbReference type="PROSITE" id="PS00178">
    <property type="entry name" value="AA_TRNA_LIGASE_I"/>
    <property type="match status" value="1"/>
</dbReference>
<sequence length="1066" mass="121910">MKEISESYVPAVVENEVREYWKANNTYRETRKLHESGKPWLFVDGPPYTTGYIHLGTAWNKILKDAILRYHSMTGQHIIERAGYDMHGLPIEVKVEEKLGFKNKADIEKYGVAKFIEECREFALTHKDLMSEQFKDLGTWMDFDDPYQTVDKGYIEAAWYTLKRCEEEKMLERGSRVVNWCPRCGTAIADAEVEYWDETDPSIFVKFPIQGTENEYLVIWTTTPWTLPANVAVAVGEEFVYAKCRAVKDGKSEDLWIAKELAEQILKYGKYQDYSIIETKTGAELAGTKYISPLASAVPMQAQIEHRVVIADYVAMENTGMVHIAPGHGWDDYLVGLKENLPAVCPVDGNGNFTDEAGIFAGKYVKAPETNQEVIDVLGDAMLAVRKITHRYGHCWRCKTPIIYRATSQWFLKVKDIREKMLEEIADEVTWYPEWAGSARFHDWVEEARDWCISRQRYWGIPIPVWVCPVCNKYHVVGRYEELEQLSGQKMTDPHRPYVDDITIPCECGGTMKRIPDIFDVWYDSGIASWATLRFPEKPEDFGKYWPADFILEGHDQTRGWFYSQLALSTIAFGKAPYKSVLMHGFALDAEGKKMSKSLGNVIAPEDVAKQFGVDVMRQYILSANAPWDDMRFSLEGVKTNHRMFNVLWNVYKFPLPYMALDGYKPAAKDGVWDPSAVEDHISEFCREDRWLISRVNSLAEQVTKEMEVCNLHRATRPISTFILDELSRWYVQLVRPRMWLEEESVSKMQAYDTMYYVMRRLVTIFAPFAPHITECMYQNLRCEGDLPSVHMVDWFSGNDALRDPVLEEEMEIVQEFDEAVANARQNGKRKGRWPVGTVVVATDSEKVAGAVSAMNDMCCDRANARTVTVVKGVWDKLDWTAVPVMKVIGKQFGRDGPKVKAFIEEANGTKLKALLTADGKVSMEKDGFTAELTEEHMTFEEKMPENIFSSPMENGTIYVDVTLTPELEAEGYSREVIRRIQEMRKQAGLAVDAKIKAEVVIDDARVMPLVDSKHDVIETEVRANCLKIRVPDGETCSCRVADEAILAMDWEIDDLKVRISISKAE</sequence>
<organism>
    <name type="scientific">Methanocorpusculum labreanum (strain ATCC 43576 / DSM 4855 / Z)</name>
    <dbReference type="NCBI Taxonomy" id="410358"/>
    <lineage>
        <taxon>Archaea</taxon>
        <taxon>Methanobacteriati</taxon>
        <taxon>Methanobacteriota</taxon>
        <taxon>Stenosarchaea group</taxon>
        <taxon>Methanomicrobia</taxon>
        <taxon>Methanomicrobiales</taxon>
        <taxon>Methanocorpusculaceae</taxon>
        <taxon>Methanocorpusculum</taxon>
    </lineage>
</organism>
<feature type="chain" id="PRO_1000022155" description="Isoleucine--tRNA ligase">
    <location>
        <begin position="1"/>
        <end position="1066"/>
    </location>
</feature>
<feature type="short sequence motif" description="'HIGH' region">
    <location>
        <begin position="47"/>
        <end position="57"/>
    </location>
</feature>
<feature type="short sequence motif" description="'KMSKS' region">
    <location>
        <begin position="594"/>
        <end position="598"/>
    </location>
</feature>
<feature type="binding site" evidence="1">
    <location>
        <position position="597"/>
    </location>
    <ligand>
        <name>ATP</name>
        <dbReference type="ChEBI" id="CHEBI:30616"/>
    </ligand>
</feature>
<name>SYI_METLZ</name>
<protein>
    <recommendedName>
        <fullName evidence="1">Isoleucine--tRNA ligase</fullName>
        <ecNumber evidence="1">6.1.1.5</ecNumber>
    </recommendedName>
    <alternativeName>
        <fullName evidence="1">Isoleucyl-tRNA synthetase</fullName>
        <shortName evidence="1">IleRS</shortName>
    </alternativeName>
</protein>
<reference key="1">
    <citation type="journal article" date="2009" name="Stand. Genomic Sci.">
        <title>Complete genome sequence of Methanocorpusculum labreanum type strain Z.</title>
        <authorList>
            <person name="Anderson I.J."/>
            <person name="Sieprawska-Lupa M."/>
            <person name="Goltsman E."/>
            <person name="Lapidus A."/>
            <person name="Copeland A."/>
            <person name="Glavina Del Rio T."/>
            <person name="Tice H."/>
            <person name="Dalin E."/>
            <person name="Barry K."/>
            <person name="Pitluck S."/>
            <person name="Hauser L."/>
            <person name="Land M."/>
            <person name="Lucas S."/>
            <person name="Richardson P."/>
            <person name="Whitman W.B."/>
            <person name="Kyrpides N.C."/>
        </authorList>
    </citation>
    <scope>NUCLEOTIDE SEQUENCE [LARGE SCALE GENOMIC DNA]</scope>
    <source>
        <strain>ATCC 43576 / DSM 4855 / Z</strain>
    </source>
</reference>
<keyword id="KW-0030">Aminoacyl-tRNA synthetase</keyword>
<keyword id="KW-0067">ATP-binding</keyword>
<keyword id="KW-0963">Cytoplasm</keyword>
<keyword id="KW-0436">Ligase</keyword>
<keyword id="KW-0479">Metal-binding</keyword>
<keyword id="KW-0547">Nucleotide-binding</keyword>
<keyword id="KW-0648">Protein biosynthesis</keyword>
<keyword id="KW-1185">Reference proteome</keyword>
<keyword id="KW-0862">Zinc</keyword>
<evidence type="ECO:0000255" key="1">
    <source>
        <dbReference type="HAMAP-Rule" id="MF_02003"/>
    </source>
</evidence>
<accession>A2SPV6</accession>
<proteinExistence type="inferred from homology"/>
<comment type="function">
    <text evidence="1">Catalyzes the attachment of isoleucine to tRNA(Ile). As IleRS can inadvertently accommodate and process structurally similar amino acids such as valine, to avoid such errors it has two additional distinct tRNA(Ile)-dependent editing activities. One activity is designated as 'pretransfer' editing and involves the hydrolysis of activated Val-AMP. The other activity is designated 'posttransfer' editing and involves deacylation of mischarged Val-tRNA(Ile).</text>
</comment>
<comment type="catalytic activity">
    <reaction evidence="1">
        <text>tRNA(Ile) + L-isoleucine + ATP = L-isoleucyl-tRNA(Ile) + AMP + diphosphate</text>
        <dbReference type="Rhea" id="RHEA:11060"/>
        <dbReference type="Rhea" id="RHEA-COMP:9666"/>
        <dbReference type="Rhea" id="RHEA-COMP:9695"/>
        <dbReference type="ChEBI" id="CHEBI:30616"/>
        <dbReference type="ChEBI" id="CHEBI:33019"/>
        <dbReference type="ChEBI" id="CHEBI:58045"/>
        <dbReference type="ChEBI" id="CHEBI:78442"/>
        <dbReference type="ChEBI" id="CHEBI:78528"/>
        <dbReference type="ChEBI" id="CHEBI:456215"/>
        <dbReference type="EC" id="6.1.1.5"/>
    </reaction>
</comment>
<comment type="cofactor">
    <cofactor evidence="1">
        <name>Zn(2+)</name>
        <dbReference type="ChEBI" id="CHEBI:29105"/>
    </cofactor>
</comment>
<comment type="subunit">
    <text evidence="1">Monomer.</text>
</comment>
<comment type="subcellular location">
    <subcellularLocation>
        <location evidence="1">Cytoplasm</location>
    </subcellularLocation>
</comment>
<comment type="domain">
    <text evidence="1">IleRS has two distinct active sites: one for aminoacylation and one for editing. The misactivated valine is translocated from the active site to the editing site, which sterically excludes the correctly activated isoleucine. The single editing site contains two valyl binding pockets, one specific for each substrate (Val-AMP or Val-tRNA(Ile)).</text>
</comment>
<comment type="similarity">
    <text evidence="1">Belongs to the class-I aminoacyl-tRNA synthetase family. IleS type 2 subfamily.</text>
</comment>